<accession>A4G0M1</accession>
<comment type="function">
    <text evidence="1">Catalyzes the formation of CDP-2,3-bis-(O-geranylgeranyl)-sn-glycerol (CDP-archaeol) from 2,3-bis-(O-geranylgeranyl)-sn-glycerol 1-phosphate (DGGGP) and CTP. This reaction is the third ether-bond-formation step in the biosynthesis of archaeal membrane lipids.</text>
</comment>
<comment type="catalytic activity">
    <reaction evidence="1">
        <text>2,3-bis-O-(geranylgeranyl)-sn-glycerol 1-phosphate + CTP + H(+) = CDP-2,3-bis-O-(geranylgeranyl)-sn-glycerol + diphosphate</text>
        <dbReference type="Rhea" id="RHEA:25690"/>
        <dbReference type="ChEBI" id="CHEBI:15378"/>
        <dbReference type="ChEBI" id="CHEBI:33019"/>
        <dbReference type="ChEBI" id="CHEBI:37563"/>
        <dbReference type="ChEBI" id="CHEBI:58837"/>
        <dbReference type="ChEBI" id="CHEBI:58838"/>
        <dbReference type="EC" id="2.7.7.67"/>
    </reaction>
</comment>
<comment type="cofactor">
    <cofactor evidence="1">
        <name>Mg(2+)</name>
        <dbReference type="ChEBI" id="CHEBI:18420"/>
    </cofactor>
</comment>
<comment type="pathway">
    <text evidence="1">Membrane lipid metabolism; glycerophospholipid metabolism.</text>
</comment>
<comment type="subcellular location">
    <subcellularLocation>
        <location evidence="1">Cell membrane</location>
        <topology evidence="1">Multi-pass membrane protein</topology>
    </subcellularLocation>
</comment>
<comment type="similarity">
    <text evidence="1">Belongs to the CDP-archaeol synthase family.</text>
</comment>
<evidence type="ECO:0000255" key="1">
    <source>
        <dbReference type="HAMAP-Rule" id="MF_01117"/>
    </source>
</evidence>
<reference key="1">
    <citation type="submission" date="2007-03" db="EMBL/GenBank/DDBJ databases">
        <title>Complete sequence of chromosome of Methanococcus maripaludis C5.</title>
        <authorList>
            <consortium name="US DOE Joint Genome Institute"/>
            <person name="Copeland A."/>
            <person name="Lucas S."/>
            <person name="Lapidus A."/>
            <person name="Barry K."/>
            <person name="Glavina del Rio T."/>
            <person name="Dalin E."/>
            <person name="Tice H."/>
            <person name="Pitluck S."/>
            <person name="Chertkov O."/>
            <person name="Brettin T."/>
            <person name="Bruce D."/>
            <person name="Han C."/>
            <person name="Detter J.C."/>
            <person name="Schmutz J."/>
            <person name="Larimer F."/>
            <person name="Land M."/>
            <person name="Hauser L."/>
            <person name="Kyrpides N."/>
            <person name="Mikhailova N."/>
            <person name="Sieprawska-Lupa M."/>
            <person name="Whitman W.B."/>
            <person name="Richardson P."/>
        </authorList>
    </citation>
    <scope>NUCLEOTIDE SEQUENCE [LARGE SCALE GENOMIC DNA]</scope>
    <source>
        <strain>C5 / ATCC BAA-1333</strain>
    </source>
</reference>
<proteinExistence type="inferred from homology"/>
<keyword id="KW-1003">Cell membrane</keyword>
<keyword id="KW-0444">Lipid biosynthesis</keyword>
<keyword id="KW-0443">Lipid metabolism</keyword>
<keyword id="KW-0460">Magnesium</keyword>
<keyword id="KW-0472">Membrane</keyword>
<keyword id="KW-0594">Phospholipid biosynthesis</keyword>
<keyword id="KW-1208">Phospholipid metabolism</keyword>
<keyword id="KW-0808">Transferase</keyword>
<keyword id="KW-0812">Transmembrane</keyword>
<keyword id="KW-1133">Transmembrane helix</keyword>
<protein>
    <recommendedName>
        <fullName evidence="1">CDP-archaeol synthase</fullName>
        <ecNumber evidence="1">2.7.7.67</ecNumber>
    </recommendedName>
    <alternativeName>
        <fullName evidence="1">CDP-2,3-bis-(O-geranylgeranyl)-sn-glycerol synthase</fullName>
    </alternativeName>
</protein>
<feature type="chain" id="PRO_1000065245" description="CDP-archaeol synthase">
    <location>
        <begin position="1"/>
        <end position="178"/>
    </location>
</feature>
<feature type="transmembrane region" description="Helical" evidence="1">
    <location>
        <begin position="3"/>
        <end position="23"/>
    </location>
</feature>
<feature type="transmembrane region" description="Helical" evidence="1">
    <location>
        <begin position="56"/>
        <end position="76"/>
    </location>
</feature>
<feature type="transmembrane region" description="Helical" evidence="1">
    <location>
        <begin position="91"/>
        <end position="111"/>
    </location>
</feature>
<feature type="transmembrane region" description="Helical" evidence="1">
    <location>
        <begin position="136"/>
        <end position="156"/>
    </location>
</feature>
<gene>
    <name evidence="1" type="primary">carS</name>
    <name type="ordered locus">MmarC5_1708</name>
</gene>
<dbReference type="EC" id="2.7.7.67" evidence="1"/>
<dbReference type="EMBL" id="CP000609">
    <property type="protein sequence ID" value="ABO36005.1"/>
    <property type="molecule type" value="Genomic_DNA"/>
</dbReference>
<dbReference type="RefSeq" id="WP_011869452.1">
    <property type="nucleotide sequence ID" value="NC_009135.1"/>
</dbReference>
<dbReference type="SMR" id="A4G0M1"/>
<dbReference type="STRING" id="402880.MmarC5_1708"/>
<dbReference type="GeneID" id="4928038"/>
<dbReference type="KEGG" id="mmq:MmarC5_1708"/>
<dbReference type="eggNOG" id="arCOG04106">
    <property type="taxonomic scope" value="Archaea"/>
</dbReference>
<dbReference type="HOGENOM" id="CLU_105710_0_0_2"/>
<dbReference type="OrthoDB" id="45383at2157"/>
<dbReference type="UniPathway" id="UPA00940"/>
<dbReference type="Proteomes" id="UP000000253">
    <property type="component" value="Chromosome"/>
</dbReference>
<dbReference type="GO" id="GO:0005886">
    <property type="term" value="C:plasma membrane"/>
    <property type="evidence" value="ECO:0007669"/>
    <property type="project" value="UniProtKB-SubCell"/>
</dbReference>
<dbReference type="GO" id="GO:0043338">
    <property type="term" value="F:CDP-2,3-bis-(O-geranylgeranyl)-sn-glycerol synthase activity"/>
    <property type="evidence" value="ECO:0007669"/>
    <property type="project" value="UniProtKB-EC"/>
</dbReference>
<dbReference type="GO" id="GO:0046474">
    <property type="term" value="P:glycerophospholipid biosynthetic process"/>
    <property type="evidence" value="ECO:0007669"/>
    <property type="project" value="UniProtKB-UniRule"/>
</dbReference>
<dbReference type="HAMAP" id="MF_01117">
    <property type="entry name" value="CDP_archaeol_synth"/>
    <property type="match status" value="1"/>
</dbReference>
<dbReference type="InterPro" id="IPR032690">
    <property type="entry name" value="CarS"/>
</dbReference>
<dbReference type="InterPro" id="IPR002726">
    <property type="entry name" value="CarS_archaea"/>
</dbReference>
<dbReference type="NCBIfam" id="NF003114">
    <property type="entry name" value="PRK04032.1"/>
    <property type="match status" value="1"/>
</dbReference>
<dbReference type="PANTHER" id="PTHR39650">
    <property type="entry name" value="CDP-ARCHAEOL SYNTHASE"/>
    <property type="match status" value="1"/>
</dbReference>
<dbReference type="PANTHER" id="PTHR39650:SF1">
    <property type="entry name" value="CDP-ARCHAEOL SYNTHASE"/>
    <property type="match status" value="1"/>
</dbReference>
<dbReference type="Pfam" id="PF01864">
    <property type="entry name" value="CarS-like"/>
    <property type="match status" value="1"/>
</dbReference>
<organism>
    <name type="scientific">Methanococcus maripaludis (strain C5 / ATCC BAA-1333)</name>
    <dbReference type="NCBI Taxonomy" id="402880"/>
    <lineage>
        <taxon>Archaea</taxon>
        <taxon>Methanobacteriati</taxon>
        <taxon>Methanobacteriota</taxon>
        <taxon>Methanomada group</taxon>
        <taxon>Methanococci</taxon>
        <taxon>Methanococcales</taxon>
        <taxon>Methanococcaceae</taxon>
        <taxon>Methanococcus</taxon>
    </lineage>
</organism>
<name>CDPAS_METM5</name>
<sequence length="178" mass="19993">MDLLLLLFSAIWYILPAYIANAVPCILGGGRPVDFGKNFFDGYRLIGNGVTYRGTFFGILFGIITGILQHFIVILYMDPESAFNYGLSGYIILSFLLATGALFGDMLGSFIKRRFKLNQGQSAPLLDQITFIVFALLFAYPFYPLPINTIILLLVISPLIHLSSNIVAYKLHLKKVWW</sequence>